<sequence>MKKVIIIDASVSPSGSYTHLLLERFLATFQAKNKDVELSTWNLNELPVGQISYNTQNAGTFFSVENSDKYIDALKAAHGVIILAPMTNFNYPATLKNFIDHVFVANKTFKDKYVTKGASSGMLGNLKVVVLGSQGAPLGWYPWGDHVNSLRGLFGFAGVASFASVIIDGTKLLYKDKSKSEVVDMFAKQVDAIANEF</sequence>
<accession>P75305</accession>
<feature type="chain" id="PRO_0000166345" description="FMN-dependent NADH:quinone oxidoreductase">
    <location>
        <begin position="1"/>
        <end position="197"/>
    </location>
</feature>
<feature type="binding site" evidence="1">
    <location>
        <position position="10"/>
    </location>
    <ligand>
        <name>FMN</name>
        <dbReference type="ChEBI" id="CHEBI:58210"/>
    </ligand>
</feature>
<keyword id="KW-0285">Flavoprotein</keyword>
<keyword id="KW-0288">FMN</keyword>
<keyword id="KW-0520">NAD</keyword>
<keyword id="KW-0560">Oxidoreductase</keyword>
<keyword id="KW-1185">Reference proteome</keyword>
<comment type="function">
    <text evidence="1">Quinone reductase that provides resistance to thiol-specific stress caused by electrophilic quinones.</text>
</comment>
<comment type="function">
    <text evidence="1">Also exhibits azoreductase activity. Catalyzes the reductive cleavage of the azo bond in aromatic azo compounds to the corresponding amines.</text>
</comment>
<comment type="catalytic activity">
    <reaction evidence="1">
        <text>2 a quinone + NADH + H(+) = 2 a 1,4-benzosemiquinone + NAD(+)</text>
        <dbReference type="Rhea" id="RHEA:65952"/>
        <dbReference type="ChEBI" id="CHEBI:15378"/>
        <dbReference type="ChEBI" id="CHEBI:57540"/>
        <dbReference type="ChEBI" id="CHEBI:57945"/>
        <dbReference type="ChEBI" id="CHEBI:132124"/>
        <dbReference type="ChEBI" id="CHEBI:134225"/>
    </reaction>
</comment>
<comment type="catalytic activity">
    <reaction evidence="1">
        <text>N,N-dimethyl-1,4-phenylenediamine + anthranilate + 2 NAD(+) = 2-(4-dimethylaminophenyl)diazenylbenzoate + 2 NADH + 2 H(+)</text>
        <dbReference type="Rhea" id="RHEA:55872"/>
        <dbReference type="ChEBI" id="CHEBI:15378"/>
        <dbReference type="ChEBI" id="CHEBI:15783"/>
        <dbReference type="ChEBI" id="CHEBI:16567"/>
        <dbReference type="ChEBI" id="CHEBI:57540"/>
        <dbReference type="ChEBI" id="CHEBI:57945"/>
        <dbReference type="ChEBI" id="CHEBI:71579"/>
        <dbReference type="EC" id="1.7.1.17"/>
    </reaction>
</comment>
<comment type="cofactor">
    <cofactor evidence="1">
        <name>FMN</name>
        <dbReference type="ChEBI" id="CHEBI:58210"/>
    </cofactor>
    <text evidence="1">Binds 1 FMN per subunit.</text>
</comment>
<comment type="subunit">
    <text evidence="1">Homodimer.</text>
</comment>
<comment type="similarity">
    <text evidence="1">Belongs to the azoreductase type 1 family.</text>
</comment>
<protein>
    <recommendedName>
        <fullName evidence="1">FMN-dependent NADH:quinone oxidoreductase</fullName>
        <ecNumber evidence="1">1.6.5.-</ecNumber>
    </recommendedName>
    <alternativeName>
        <fullName evidence="1">Azo-dye reductase</fullName>
    </alternativeName>
    <alternativeName>
        <fullName evidence="1">FMN-dependent NADH-azo compound oxidoreductase</fullName>
    </alternativeName>
    <alternativeName>
        <fullName evidence="1">FMN-dependent NADH-azoreductase</fullName>
        <ecNumber evidence="1">1.7.1.17</ecNumber>
    </alternativeName>
</protein>
<gene>
    <name evidence="1" type="primary">azoR</name>
    <name type="ordered locus">MPN_479</name>
    <name type="ORF">MP362</name>
</gene>
<dbReference type="EC" id="1.6.5.-" evidence="1"/>
<dbReference type="EC" id="1.7.1.17" evidence="1"/>
<dbReference type="EMBL" id="U00089">
    <property type="protein sequence ID" value="AAB96010.1"/>
    <property type="molecule type" value="Genomic_DNA"/>
</dbReference>
<dbReference type="PIR" id="S73688">
    <property type="entry name" value="S73688"/>
</dbReference>
<dbReference type="RefSeq" id="NP_110167.1">
    <property type="nucleotide sequence ID" value="NC_000912.1"/>
</dbReference>
<dbReference type="RefSeq" id="WP_010874835.1">
    <property type="nucleotide sequence ID" value="NZ_OU342337.1"/>
</dbReference>
<dbReference type="SMR" id="P75305"/>
<dbReference type="IntAct" id="P75305">
    <property type="interactions" value="1"/>
</dbReference>
<dbReference type="STRING" id="272634.MPN_479"/>
<dbReference type="EnsemblBacteria" id="AAB96010">
    <property type="protein sequence ID" value="AAB96010"/>
    <property type="gene ID" value="MPN_479"/>
</dbReference>
<dbReference type="KEGG" id="mpn:MPN_479"/>
<dbReference type="PATRIC" id="fig|272634.6.peg.518"/>
<dbReference type="HOGENOM" id="CLU_088964_2_0_14"/>
<dbReference type="OrthoDB" id="9805013at2"/>
<dbReference type="BioCyc" id="MPNE272634:G1GJ3-785-MONOMER"/>
<dbReference type="Proteomes" id="UP000000808">
    <property type="component" value="Chromosome"/>
</dbReference>
<dbReference type="GO" id="GO:0009055">
    <property type="term" value="F:electron transfer activity"/>
    <property type="evidence" value="ECO:0007669"/>
    <property type="project" value="UniProtKB-UniRule"/>
</dbReference>
<dbReference type="GO" id="GO:0010181">
    <property type="term" value="F:FMN binding"/>
    <property type="evidence" value="ECO:0007669"/>
    <property type="project" value="UniProtKB-UniRule"/>
</dbReference>
<dbReference type="GO" id="GO:0016652">
    <property type="term" value="F:oxidoreductase activity, acting on NAD(P)H as acceptor"/>
    <property type="evidence" value="ECO:0007669"/>
    <property type="project" value="UniProtKB-UniRule"/>
</dbReference>
<dbReference type="GO" id="GO:0016655">
    <property type="term" value="F:oxidoreductase activity, acting on NAD(P)H, quinone or similar compound as acceptor"/>
    <property type="evidence" value="ECO:0007669"/>
    <property type="project" value="InterPro"/>
</dbReference>
<dbReference type="Gene3D" id="3.40.50.360">
    <property type="match status" value="1"/>
</dbReference>
<dbReference type="HAMAP" id="MF_01216">
    <property type="entry name" value="Azoreductase_type1"/>
    <property type="match status" value="1"/>
</dbReference>
<dbReference type="InterPro" id="IPR003680">
    <property type="entry name" value="Flavodoxin_fold"/>
</dbReference>
<dbReference type="InterPro" id="IPR029039">
    <property type="entry name" value="Flavoprotein-like_sf"/>
</dbReference>
<dbReference type="InterPro" id="IPR050104">
    <property type="entry name" value="FMN-dep_NADH:Q_OxRdtase_AzoR1"/>
</dbReference>
<dbReference type="InterPro" id="IPR023048">
    <property type="entry name" value="NADH:quinone_OxRdtase_FMN_depd"/>
</dbReference>
<dbReference type="NCBIfam" id="NF002370">
    <property type="entry name" value="PRK01355.1"/>
    <property type="match status" value="1"/>
</dbReference>
<dbReference type="PANTHER" id="PTHR43741">
    <property type="entry name" value="FMN-DEPENDENT NADH-AZOREDUCTASE 1"/>
    <property type="match status" value="1"/>
</dbReference>
<dbReference type="PANTHER" id="PTHR43741:SF4">
    <property type="entry name" value="FMN-DEPENDENT NADH:QUINONE OXIDOREDUCTASE"/>
    <property type="match status" value="1"/>
</dbReference>
<dbReference type="Pfam" id="PF02525">
    <property type="entry name" value="Flavodoxin_2"/>
    <property type="match status" value="1"/>
</dbReference>
<dbReference type="SUPFAM" id="SSF52218">
    <property type="entry name" value="Flavoproteins"/>
    <property type="match status" value="1"/>
</dbReference>
<evidence type="ECO:0000255" key="1">
    <source>
        <dbReference type="HAMAP-Rule" id="MF_01216"/>
    </source>
</evidence>
<reference key="1">
    <citation type="journal article" date="1996" name="Nucleic Acids Res.">
        <title>Complete sequence analysis of the genome of the bacterium Mycoplasma pneumoniae.</title>
        <authorList>
            <person name="Himmelreich R."/>
            <person name="Hilbert H."/>
            <person name="Plagens H."/>
            <person name="Pirkl E."/>
            <person name="Li B.-C."/>
            <person name="Herrmann R."/>
        </authorList>
    </citation>
    <scope>NUCLEOTIDE SEQUENCE [LARGE SCALE GENOMIC DNA]</scope>
    <source>
        <strain>ATCC 29342 / M129 / Subtype 1</strain>
    </source>
</reference>
<proteinExistence type="inferred from homology"/>
<organism>
    <name type="scientific">Mycoplasma pneumoniae (strain ATCC 29342 / M129 / Subtype 1)</name>
    <name type="common">Mycoplasmoides pneumoniae</name>
    <dbReference type="NCBI Taxonomy" id="272634"/>
    <lineage>
        <taxon>Bacteria</taxon>
        <taxon>Bacillati</taxon>
        <taxon>Mycoplasmatota</taxon>
        <taxon>Mycoplasmoidales</taxon>
        <taxon>Mycoplasmoidaceae</taxon>
        <taxon>Mycoplasmoides</taxon>
    </lineage>
</organism>
<name>AZOR_MYCPN</name>